<protein>
    <recommendedName>
        <fullName evidence="1">Nicotinamide-nucleotide adenylyltransferase</fullName>
        <ecNumber evidence="1">2.7.7.1</ecNumber>
    </recommendedName>
    <alternativeName>
        <fullName evidence="1">NAD(+) diphosphorylase</fullName>
    </alternativeName>
    <alternativeName>
        <fullName evidence="1">NAD(+) pyrophosphorylase</fullName>
    </alternativeName>
    <alternativeName>
        <fullName evidence="1">NMN adenylyltransferase</fullName>
    </alternativeName>
</protein>
<accession>A0B5N0</accession>
<comment type="catalytic activity">
    <reaction evidence="1">
        <text>beta-nicotinamide D-ribonucleotide + ATP + H(+) = diphosphate + NAD(+)</text>
        <dbReference type="Rhea" id="RHEA:21360"/>
        <dbReference type="ChEBI" id="CHEBI:14649"/>
        <dbReference type="ChEBI" id="CHEBI:15378"/>
        <dbReference type="ChEBI" id="CHEBI:30616"/>
        <dbReference type="ChEBI" id="CHEBI:33019"/>
        <dbReference type="ChEBI" id="CHEBI:57540"/>
        <dbReference type="EC" id="2.7.7.1"/>
    </reaction>
</comment>
<comment type="pathway">
    <text evidence="1">Cofactor biosynthesis; NAD(+) biosynthesis; NAD(+) from nicotinamide D-ribonucleotide: step 1/1.</text>
</comment>
<comment type="subcellular location">
    <subcellularLocation>
        <location evidence="1">Cytoplasm</location>
    </subcellularLocation>
</comment>
<comment type="similarity">
    <text evidence="1">Belongs to the archaeal NMN adenylyltransferase family.</text>
</comment>
<sequence length="170" mass="19643">MRRGFYIGRFQPYHMGHHLVLEQISREVDEIIVGIGTAQISHTVTDPFTAGERIAMIYGALRELGRWFYIIPLPDINRNAVWVSHVKSMTPPFEVVYSNNPLVVELFMEAGMEVRRPPMYRREVYSGTVIRRLMIEGGDWRQLVPDAVAKVIDEIKGVERLRNISKKDFA</sequence>
<name>NADM_METTP</name>
<organism>
    <name type="scientific">Methanothrix thermoacetophila (strain DSM 6194 / JCM 14653 / NBRC 101360 / PT)</name>
    <name type="common">Methanosaeta thermophila</name>
    <dbReference type="NCBI Taxonomy" id="349307"/>
    <lineage>
        <taxon>Archaea</taxon>
        <taxon>Methanobacteriati</taxon>
        <taxon>Methanobacteriota</taxon>
        <taxon>Stenosarchaea group</taxon>
        <taxon>Methanomicrobia</taxon>
        <taxon>Methanotrichales</taxon>
        <taxon>Methanotrichaceae</taxon>
        <taxon>Methanothrix</taxon>
    </lineage>
</organism>
<evidence type="ECO:0000255" key="1">
    <source>
        <dbReference type="HAMAP-Rule" id="MF_00243"/>
    </source>
</evidence>
<reference key="1">
    <citation type="submission" date="2006-10" db="EMBL/GenBank/DDBJ databases">
        <title>Complete sequence of Methanosaeta thermophila PT.</title>
        <authorList>
            <consortium name="US DOE Joint Genome Institute"/>
            <person name="Copeland A."/>
            <person name="Lucas S."/>
            <person name="Lapidus A."/>
            <person name="Barry K."/>
            <person name="Detter J.C."/>
            <person name="Glavina del Rio T."/>
            <person name="Hammon N."/>
            <person name="Israni S."/>
            <person name="Pitluck S."/>
            <person name="Chain P."/>
            <person name="Malfatti S."/>
            <person name="Shin M."/>
            <person name="Vergez L."/>
            <person name="Schmutz J."/>
            <person name="Larimer F."/>
            <person name="Land M."/>
            <person name="Hauser L."/>
            <person name="Kyrpides N."/>
            <person name="Kim E."/>
            <person name="Smith K.S."/>
            <person name="Ingram-Smith C."/>
            <person name="Richardson P."/>
        </authorList>
    </citation>
    <scope>NUCLEOTIDE SEQUENCE [LARGE SCALE GENOMIC DNA]</scope>
    <source>
        <strain>DSM 6194 / JCM 14653 / NBRC 101360 / PT</strain>
    </source>
</reference>
<proteinExistence type="inferred from homology"/>
<dbReference type="EC" id="2.7.7.1" evidence="1"/>
<dbReference type="EMBL" id="CP000477">
    <property type="protein sequence ID" value="ABK14004.1"/>
    <property type="molecule type" value="Genomic_DNA"/>
</dbReference>
<dbReference type="RefSeq" id="WP_011695403.1">
    <property type="nucleotide sequence ID" value="NC_008553.1"/>
</dbReference>
<dbReference type="SMR" id="A0B5N0"/>
<dbReference type="STRING" id="349307.Mthe_0206"/>
<dbReference type="GeneID" id="4462987"/>
<dbReference type="KEGG" id="mtp:Mthe_0206"/>
<dbReference type="HOGENOM" id="CLU_108783_0_0_2"/>
<dbReference type="OrthoDB" id="264480at2157"/>
<dbReference type="UniPathway" id="UPA00253">
    <property type="reaction ID" value="UER00600"/>
</dbReference>
<dbReference type="Proteomes" id="UP000000674">
    <property type="component" value="Chromosome"/>
</dbReference>
<dbReference type="GO" id="GO:0005737">
    <property type="term" value="C:cytoplasm"/>
    <property type="evidence" value="ECO:0007669"/>
    <property type="project" value="UniProtKB-SubCell"/>
</dbReference>
<dbReference type="GO" id="GO:0005524">
    <property type="term" value="F:ATP binding"/>
    <property type="evidence" value="ECO:0007669"/>
    <property type="project" value="UniProtKB-KW"/>
</dbReference>
<dbReference type="GO" id="GO:0000309">
    <property type="term" value="F:nicotinamide-nucleotide adenylyltransferase activity"/>
    <property type="evidence" value="ECO:0007669"/>
    <property type="project" value="UniProtKB-UniRule"/>
</dbReference>
<dbReference type="GO" id="GO:0009435">
    <property type="term" value="P:NAD biosynthetic process"/>
    <property type="evidence" value="ECO:0007669"/>
    <property type="project" value="UniProtKB-UniRule"/>
</dbReference>
<dbReference type="CDD" id="cd02166">
    <property type="entry name" value="NMNAT_Archaea"/>
    <property type="match status" value="1"/>
</dbReference>
<dbReference type="Gene3D" id="3.40.50.620">
    <property type="entry name" value="HUPs"/>
    <property type="match status" value="1"/>
</dbReference>
<dbReference type="HAMAP" id="MF_00243">
    <property type="entry name" value="NMN_adenylyltr"/>
    <property type="match status" value="1"/>
</dbReference>
<dbReference type="InterPro" id="IPR004821">
    <property type="entry name" value="Cyt_trans-like"/>
</dbReference>
<dbReference type="InterPro" id="IPR006418">
    <property type="entry name" value="NMN_Atrans_arc"/>
</dbReference>
<dbReference type="InterPro" id="IPR014729">
    <property type="entry name" value="Rossmann-like_a/b/a_fold"/>
</dbReference>
<dbReference type="NCBIfam" id="TIGR01527">
    <property type="entry name" value="arch_NMN_Atrans"/>
    <property type="match status" value="1"/>
</dbReference>
<dbReference type="NCBIfam" id="TIGR00125">
    <property type="entry name" value="cyt_tran_rel"/>
    <property type="match status" value="1"/>
</dbReference>
<dbReference type="NCBIfam" id="NF002243">
    <property type="entry name" value="PRK01153.1"/>
    <property type="match status" value="1"/>
</dbReference>
<dbReference type="PANTHER" id="PTHR21342:SF0">
    <property type="entry name" value="BIFUNCTIONAL NMN ADENYLYLTRANSFERASE_NUDIX HYDROLASE"/>
    <property type="match status" value="1"/>
</dbReference>
<dbReference type="PANTHER" id="PTHR21342">
    <property type="entry name" value="PHOSPHOPANTETHEINE ADENYLYLTRANSFERASE"/>
    <property type="match status" value="1"/>
</dbReference>
<dbReference type="Pfam" id="PF01467">
    <property type="entry name" value="CTP_transf_like"/>
    <property type="match status" value="1"/>
</dbReference>
<dbReference type="SUPFAM" id="SSF52374">
    <property type="entry name" value="Nucleotidylyl transferase"/>
    <property type="match status" value="1"/>
</dbReference>
<gene>
    <name type="ordered locus">Mthe_0206</name>
</gene>
<feature type="chain" id="PRO_1000005740" description="Nicotinamide-nucleotide adenylyltransferase">
    <location>
        <begin position="1"/>
        <end position="170"/>
    </location>
</feature>
<keyword id="KW-0067">ATP-binding</keyword>
<keyword id="KW-0963">Cytoplasm</keyword>
<keyword id="KW-0520">NAD</keyword>
<keyword id="KW-0547">Nucleotide-binding</keyword>
<keyword id="KW-0548">Nucleotidyltransferase</keyword>
<keyword id="KW-0662">Pyridine nucleotide biosynthesis</keyword>
<keyword id="KW-1185">Reference proteome</keyword>
<keyword id="KW-0808">Transferase</keyword>